<sequence>MMLEINVKKRLGQLVLNARLTIPGQGITGIFGISGSGKSSLINLVSGLIHPDEGNIRLNDRTLIDTANNICLAPNQRNIGYVFQDARLFPHYSVKGNLCYGIKRFNQQEFNRIVRLLGIEHLLARYPLTLSGGEKQRVAIGRALLSNPEMLLMDEPLSALDLPRKRELLAYLEKLSQEINIPILYVTHSLDELFRLADFVVLLDEGKVAAFDSLENLWQSPLFEPWQEQGQKSAVLSLPILNHNFSYKMTALLLGEQQLWVKLLNGDEGKTVRICIRSTDVSITLTVPEKTSIRNILSGKIITLLPKGNQVDVKIALGKDEIWASVSTWAAEELQLQIGQSVYAQIKAVSVM</sequence>
<feature type="chain" id="PRO_0000092543" description="Molybdenum import ATP-binding protein ModC">
    <location>
        <begin position="1"/>
        <end position="352"/>
    </location>
</feature>
<feature type="domain" description="ABC transporter" evidence="1">
    <location>
        <begin position="2"/>
        <end position="230"/>
    </location>
</feature>
<feature type="domain" description="Mop" evidence="2">
    <location>
        <begin position="290"/>
        <end position="352"/>
    </location>
</feature>
<feature type="binding site" evidence="1">
    <location>
        <begin position="32"/>
        <end position="39"/>
    </location>
    <ligand>
        <name>ATP</name>
        <dbReference type="ChEBI" id="CHEBI:30616"/>
    </ligand>
</feature>
<reference key="1">
    <citation type="journal article" date="2004" name="Nat. Biotechnol.">
        <title>The genome sequence of the capnophilic rumen bacterium Mannheimia succiniciproducens.</title>
        <authorList>
            <person name="Hong S.H."/>
            <person name="Kim J.S."/>
            <person name="Lee S.Y."/>
            <person name="In Y.H."/>
            <person name="Choi S.S."/>
            <person name="Rih J.-K."/>
            <person name="Kim C.H."/>
            <person name="Jeong H."/>
            <person name="Hur C.G."/>
            <person name="Kim J.J."/>
        </authorList>
    </citation>
    <scope>NUCLEOTIDE SEQUENCE [LARGE SCALE GENOMIC DNA]</scope>
    <source>
        <strain>KCTC 0769BP / MBEL55E</strain>
    </source>
</reference>
<accession>Q65SW3</accession>
<evidence type="ECO:0000255" key="1">
    <source>
        <dbReference type="HAMAP-Rule" id="MF_01705"/>
    </source>
</evidence>
<evidence type="ECO:0000255" key="2">
    <source>
        <dbReference type="PROSITE-ProRule" id="PRU01213"/>
    </source>
</evidence>
<name>MODC_MANSM</name>
<organism>
    <name type="scientific">Mannheimia succiniciproducens (strain KCTC 0769BP / MBEL55E)</name>
    <dbReference type="NCBI Taxonomy" id="221988"/>
    <lineage>
        <taxon>Bacteria</taxon>
        <taxon>Pseudomonadati</taxon>
        <taxon>Pseudomonadota</taxon>
        <taxon>Gammaproteobacteria</taxon>
        <taxon>Pasteurellales</taxon>
        <taxon>Pasteurellaceae</taxon>
        <taxon>Basfia</taxon>
    </lineage>
</organism>
<protein>
    <recommendedName>
        <fullName evidence="1">Molybdenum import ATP-binding protein ModC</fullName>
        <ecNumber evidence="1">7.3.2.5</ecNumber>
    </recommendedName>
</protein>
<gene>
    <name evidence="1" type="primary">modC</name>
    <name type="ordered locus">MS1340</name>
</gene>
<comment type="function">
    <text evidence="1">Part of the ABC transporter complex ModABC involved in molybdenum import. Responsible for energy coupling to the transport system.</text>
</comment>
<comment type="catalytic activity">
    <reaction evidence="1">
        <text>molybdate(out) + ATP + H2O = molybdate(in) + ADP + phosphate + H(+)</text>
        <dbReference type="Rhea" id="RHEA:22020"/>
        <dbReference type="ChEBI" id="CHEBI:15377"/>
        <dbReference type="ChEBI" id="CHEBI:15378"/>
        <dbReference type="ChEBI" id="CHEBI:30616"/>
        <dbReference type="ChEBI" id="CHEBI:36264"/>
        <dbReference type="ChEBI" id="CHEBI:43474"/>
        <dbReference type="ChEBI" id="CHEBI:456216"/>
        <dbReference type="EC" id="7.3.2.5"/>
    </reaction>
</comment>
<comment type="subunit">
    <text evidence="1">The complex is composed of two ATP-binding proteins (ModC), two transmembrane proteins (ModB) and a solute-binding protein (ModA).</text>
</comment>
<comment type="subcellular location">
    <subcellularLocation>
        <location evidence="1">Cell inner membrane</location>
        <topology evidence="1">Peripheral membrane protein</topology>
    </subcellularLocation>
</comment>
<comment type="similarity">
    <text evidence="1">Belongs to the ABC transporter superfamily. Molybdate importer (TC 3.A.1.8) family.</text>
</comment>
<proteinExistence type="inferred from homology"/>
<dbReference type="EC" id="7.3.2.5" evidence="1"/>
<dbReference type="EMBL" id="AE016827">
    <property type="protein sequence ID" value="AAU37947.1"/>
    <property type="molecule type" value="Genomic_DNA"/>
</dbReference>
<dbReference type="SMR" id="Q65SW3"/>
<dbReference type="STRING" id="221988.MS1340"/>
<dbReference type="KEGG" id="msu:MS1340"/>
<dbReference type="eggNOG" id="COG4148">
    <property type="taxonomic scope" value="Bacteria"/>
</dbReference>
<dbReference type="HOGENOM" id="CLU_000604_1_1_6"/>
<dbReference type="Proteomes" id="UP000000607">
    <property type="component" value="Chromosome"/>
</dbReference>
<dbReference type="GO" id="GO:0005886">
    <property type="term" value="C:plasma membrane"/>
    <property type="evidence" value="ECO:0007669"/>
    <property type="project" value="UniProtKB-SubCell"/>
</dbReference>
<dbReference type="GO" id="GO:0015412">
    <property type="term" value="F:ABC-type molybdate transporter activity"/>
    <property type="evidence" value="ECO:0007669"/>
    <property type="project" value="UniProtKB-EC"/>
</dbReference>
<dbReference type="GO" id="GO:0005524">
    <property type="term" value="F:ATP binding"/>
    <property type="evidence" value="ECO:0007669"/>
    <property type="project" value="UniProtKB-KW"/>
</dbReference>
<dbReference type="GO" id="GO:0016887">
    <property type="term" value="F:ATP hydrolysis activity"/>
    <property type="evidence" value="ECO:0007669"/>
    <property type="project" value="InterPro"/>
</dbReference>
<dbReference type="FunFam" id="3.40.50.300:FF:000634">
    <property type="entry name" value="Molybdenum import ATP-binding protein ModC"/>
    <property type="match status" value="1"/>
</dbReference>
<dbReference type="Gene3D" id="2.40.50.100">
    <property type="match status" value="1"/>
</dbReference>
<dbReference type="Gene3D" id="3.40.50.300">
    <property type="entry name" value="P-loop containing nucleotide triphosphate hydrolases"/>
    <property type="match status" value="1"/>
</dbReference>
<dbReference type="InterPro" id="IPR003593">
    <property type="entry name" value="AAA+_ATPase"/>
</dbReference>
<dbReference type="InterPro" id="IPR003439">
    <property type="entry name" value="ABC_transporter-like_ATP-bd"/>
</dbReference>
<dbReference type="InterPro" id="IPR017871">
    <property type="entry name" value="ABC_transporter-like_CS"/>
</dbReference>
<dbReference type="InterPro" id="IPR008995">
    <property type="entry name" value="Mo/tungstate-bd_C_term_dom"/>
</dbReference>
<dbReference type="InterPro" id="IPR011868">
    <property type="entry name" value="ModC_ABC_ATP-bd"/>
</dbReference>
<dbReference type="InterPro" id="IPR050334">
    <property type="entry name" value="Molybdenum_import_ModC"/>
</dbReference>
<dbReference type="InterPro" id="IPR004606">
    <property type="entry name" value="Mop_domain"/>
</dbReference>
<dbReference type="InterPro" id="IPR027417">
    <property type="entry name" value="P-loop_NTPase"/>
</dbReference>
<dbReference type="InterPro" id="IPR005116">
    <property type="entry name" value="Transp-assoc_OB_typ1"/>
</dbReference>
<dbReference type="NCBIfam" id="TIGR02142">
    <property type="entry name" value="modC_ABC"/>
    <property type="match status" value="1"/>
</dbReference>
<dbReference type="NCBIfam" id="TIGR00638">
    <property type="entry name" value="Mop"/>
    <property type="match status" value="1"/>
</dbReference>
<dbReference type="NCBIfam" id="NF008355">
    <property type="entry name" value="PRK11144.1"/>
    <property type="match status" value="1"/>
</dbReference>
<dbReference type="PANTHER" id="PTHR43514">
    <property type="entry name" value="ABC TRANSPORTER I FAMILY MEMBER 10"/>
    <property type="match status" value="1"/>
</dbReference>
<dbReference type="PANTHER" id="PTHR43514:SF4">
    <property type="entry name" value="ABC TRANSPORTER I FAMILY MEMBER 10"/>
    <property type="match status" value="1"/>
</dbReference>
<dbReference type="Pfam" id="PF00005">
    <property type="entry name" value="ABC_tran"/>
    <property type="match status" value="1"/>
</dbReference>
<dbReference type="Pfam" id="PF03459">
    <property type="entry name" value="TOBE"/>
    <property type="match status" value="1"/>
</dbReference>
<dbReference type="SMART" id="SM00382">
    <property type="entry name" value="AAA"/>
    <property type="match status" value="1"/>
</dbReference>
<dbReference type="SUPFAM" id="SSF50331">
    <property type="entry name" value="MOP-like"/>
    <property type="match status" value="1"/>
</dbReference>
<dbReference type="SUPFAM" id="SSF52540">
    <property type="entry name" value="P-loop containing nucleoside triphosphate hydrolases"/>
    <property type="match status" value="1"/>
</dbReference>
<dbReference type="PROSITE" id="PS00211">
    <property type="entry name" value="ABC_TRANSPORTER_1"/>
    <property type="match status" value="1"/>
</dbReference>
<dbReference type="PROSITE" id="PS50893">
    <property type="entry name" value="ABC_TRANSPORTER_2"/>
    <property type="match status" value="1"/>
</dbReference>
<dbReference type="PROSITE" id="PS51241">
    <property type="entry name" value="MODC"/>
    <property type="match status" value="1"/>
</dbReference>
<dbReference type="PROSITE" id="PS51866">
    <property type="entry name" value="MOP"/>
    <property type="match status" value="1"/>
</dbReference>
<keyword id="KW-0067">ATP-binding</keyword>
<keyword id="KW-0997">Cell inner membrane</keyword>
<keyword id="KW-1003">Cell membrane</keyword>
<keyword id="KW-0472">Membrane</keyword>
<keyword id="KW-0500">Molybdenum</keyword>
<keyword id="KW-0547">Nucleotide-binding</keyword>
<keyword id="KW-1278">Translocase</keyword>
<keyword id="KW-0813">Transport</keyword>